<accession>P55937</accession>
<accession>Q80VF5</accession>
<accession>Q8CCK4</accession>
<accession>Q9QYT2</accession>
<accession>Q9QYT3</accession>
<comment type="function">
    <text evidence="5">Plays an important role in spermatogenesis and/or testis development. Probably identical with the serologically detectable male antigen (SDM). Probably involved in maintaining Golgi structure.</text>
</comment>
<comment type="subunit">
    <text evidence="1">Homodimer. Interacts with GOLGA7. Interacts with GOPC (By similarity).</text>
</comment>
<comment type="subcellular location">
    <subcellularLocation>
        <location evidence="1">Cytoplasm</location>
    </subcellularLocation>
    <subcellularLocation>
        <location evidence="1">Golgi apparatus</location>
        <location evidence="1">Golgi stack membrane</location>
        <topology evidence="1">Peripheral membrane protein</topology>
    </subcellularLocation>
</comment>
<comment type="alternative products">
    <event type="alternative splicing"/>
    <isoform>
        <id>P55937-2</id>
        <name>2</name>
        <sequence type="displayed"/>
    </isoform>
    <isoform>
        <id>P55937-1</id>
        <name>1</name>
        <sequence type="described" ref="VSP_016071"/>
    </isoform>
</comment>
<comment type="tissue specificity">
    <text>Highly expressed in testis. Transcripts can be found in spermatids during spermatogenesis. No expression in Leydig cells, spermatogonia or spermatocytes. Detected at low levels in all tissues.</text>
</comment>
<comment type="domain">
    <text>Extended rod-like protein with coiled-coil domains.</text>
</comment>
<comment type="PTM">
    <text evidence="1">Cleaved by caspases in apoptotic cells.</text>
</comment>
<evidence type="ECO:0000250" key="1"/>
<evidence type="ECO:0000250" key="2">
    <source>
        <dbReference type="UniProtKB" id="Q08378"/>
    </source>
</evidence>
<evidence type="ECO:0000255" key="3"/>
<evidence type="ECO:0000256" key="4">
    <source>
        <dbReference type="SAM" id="MobiDB-lite"/>
    </source>
</evidence>
<evidence type="ECO:0000269" key="5">
    <source>
    </source>
</evidence>
<evidence type="ECO:0000303" key="6">
    <source>
    </source>
</evidence>
<evidence type="ECO:0000303" key="7">
    <source>
    </source>
</evidence>
<evidence type="ECO:0000305" key="8"/>
<evidence type="ECO:0007744" key="9">
    <source>
    </source>
</evidence>
<evidence type="ECO:0007744" key="10">
    <source>
    </source>
</evidence>
<evidence type="ECO:0007744" key="11">
    <source>
    </source>
</evidence>
<keyword id="KW-0007">Acetylation</keyword>
<keyword id="KW-0025">Alternative splicing</keyword>
<keyword id="KW-0175">Coiled coil</keyword>
<keyword id="KW-0963">Cytoplasm</keyword>
<keyword id="KW-0217">Developmental protein</keyword>
<keyword id="KW-0221">Differentiation</keyword>
<keyword id="KW-0333">Golgi apparatus</keyword>
<keyword id="KW-0472">Membrane</keyword>
<keyword id="KW-0597">Phosphoprotein</keyword>
<keyword id="KW-1185">Reference proteome</keyword>
<keyword id="KW-0744">Spermatogenesis</keyword>
<protein>
    <recommendedName>
        <fullName>Golgin subfamily A member 3</fullName>
    </recommendedName>
    <alternativeName>
        <fullName>Golgin-160</fullName>
    </alternativeName>
    <alternativeName>
        <fullName>Male-enhanced antigen 2</fullName>
        <shortName>MEA-2</shortName>
    </alternativeName>
</protein>
<reference key="1">
    <citation type="journal article" date="1997" name="DNA Seq.">
        <title>Cloning and molecular characterization of cDNA encoding a mouse male-enhanced antigen-2 (Mea-2): a putative family of the Golgi autoantigen.</title>
        <authorList>
            <person name="Kondo M."/>
            <person name="Sutou S."/>
        </authorList>
    </citation>
    <scope>NUCLEOTIDE SEQUENCE [MRNA] (ISOFORM 1)</scope>
    <source>
        <strain>CD-1</strain>
        <tissue>Testis</tissue>
    </source>
</reference>
<reference key="2">
    <citation type="journal article" date="2002" name="Mol. Reprod. Dev.">
        <title>Golgi matrix protein gene, Golga3/Mea2, rearranged and re-expressed in pachytene spermatocytes restores spermatogenesis in the mouse.</title>
        <authorList>
            <person name="Banu Y."/>
            <person name="Matsuda M."/>
            <person name="Yoshihara M."/>
            <person name="Kondo M."/>
            <person name="Sutou S."/>
            <person name="Matsukuma S."/>
        </authorList>
    </citation>
    <scope>NUCLEOTIDE SEQUENCE [GENOMIC DNA] (ISOFORMS 1 AND 2)</scope>
    <scope>FUNCTION</scope>
    <source>
        <strain>C57BL/6J</strain>
    </source>
</reference>
<reference key="3">
    <citation type="journal article" date="2004" name="Genome Res.">
        <title>The status, quality, and expansion of the NIH full-length cDNA project: the Mammalian Gene Collection (MGC).</title>
        <authorList>
            <consortium name="The MGC Project Team"/>
        </authorList>
    </citation>
    <scope>NUCLEOTIDE SEQUENCE [LARGE SCALE MRNA] (ISOFORM 1)</scope>
    <source>
        <strain>C57BL/6J</strain>
        <strain>FVB/N-3</strain>
        <tissue>Brain</tissue>
        <tissue>Mammary tumor</tissue>
    </source>
</reference>
<reference key="4">
    <citation type="journal article" date="2005" name="Science">
        <title>The transcriptional landscape of the mammalian genome.</title>
        <authorList>
            <person name="Carninci P."/>
            <person name="Kasukawa T."/>
            <person name="Katayama S."/>
            <person name="Gough J."/>
            <person name="Frith M.C."/>
            <person name="Maeda N."/>
            <person name="Oyama R."/>
            <person name="Ravasi T."/>
            <person name="Lenhard B."/>
            <person name="Wells C."/>
            <person name="Kodzius R."/>
            <person name="Shimokawa K."/>
            <person name="Bajic V.B."/>
            <person name="Brenner S.E."/>
            <person name="Batalov S."/>
            <person name="Forrest A.R."/>
            <person name="Zavolan M."/>
            <person name="Davis M.J."/>
            <person name="Wilming L.G."/>
            <person name="Aidinis V."/>
            <person name="Allen J.E."/>
            <person name="Ambesi-Impiombato A."/>
            <person name="Apweiler R."/>
            <person name="Aturaliya R.N."/>
            <person name="Bailey T.L."/>
            <person name="Bansal M."/>
            <person name="Baxter L."/>
            <person name="Beisel K.W."/>
            <person name="Bersano T."/>
            <person name="Bono H."/>
            <person name="Chalk A.M."/>
            <person name="Chiu K.P."/>
            <person name="Choudhary V."/>
            <person name="Christoffels A."/>
            <person name="Clutterbuck D.R."/>
            <person name="Crowe M.L."/>
            <person name="Dalla E."/>
            <person name="Dalrymple B.P."/>
            <person name="de Bono B."/>
            <person name="Della Gatta G."/>
            <person name="di Bernardo D."/>
            <person name="Down T."/>
            <person name="Engstrom P."/>
            <person name="Fagiolini M."/>
            <person name="Faulkner G."/>
            <person name="Fletcher C.F."/>
            <person name="Fukushima T."/>
            <person name="Furuno M."/>
            <person name="Futaki S."/>
            <person name="Gariboldi M."/>
            <person name="Georgii-Hemming P."/>
            <person name="Gingeras T.R."/>
            <person name="Gojobori T."/>
            <person name="Green R.E."/>
            <person name="Gustincich S."/>
            <person name="Harbers M."/>
            <person name="Hayashi Y."/>
            <person name="Hensch T.K."/>
            <person name="Hirokawa N."/>
            <person name="Hill D."/>
            <person name="Huminiecki L."/>
            <person name="Iacono M."/>
            <person name="Ikeo K."/>
            <person name="Iwama A."/>
            <person name="Ishikawa T."/>
            <person name="Jakt M."/>
            <person name="Kanapin A."/>
            <person name="Katoh M."/>
            <person name="Kawasawa Y."/>
            <person name="Kelso J."/>
            <person name="Kitamura H."/>
            <person name="Kitano H."/>
            <person name="Kollias G."/>
            <person name="Krishnan S.P."/>
            <person name="Kruger A."/>
            <person name="Kummerfeld S.K."/>
            <person name="Kurochkin I.V."/>
            <person name="Lareau L.F."/>
            <person name="Lazarevic D."/>
            <person name="Lipovich L."/>
            <person name="Liu J."/>
            <person name="Liuni S."/>
            <person name="McWilliam S."/>
            <person name="Madan Babu M."/>
            <person name="Madera M."/>
            <person name="Marchionni L."/>
            <person name="Matsuda H."/>
            <person name="Matsuzawa S."/>
            <person name="Miki H."/>
            <person name="Mignone F."/>
            <person name="Miyake S."/>
            <person name="Morris K."/>
            <person name="Mottagui-Tabar S."/>
            <person name="Mulder N."/>
            <person name="Nakano N."/>
            <person name="Nakauchi H."/>
            <person name="Ng P."/>
            <person name="Nilsson R."/>
            <person name="Nishiguchi S."/>
            <person name="Nishikawa S."/>
            <person name="Nori F."/>
            <person name="Ohara O."/>
            <person name="Okazaki Y."/>
            <person name="Orlando V."/>
            <person name="Pang K.C."/>
            <person name="Pavan W.J."/>
            <person name="Pavesi G."/>
            <person name="Pesole G."/>
            <person name="Petrovsky N."/>
            <person name="Piazza S."/>
            <person name="Reed J."/>
            <person name="Reid J.F."/>
            <person name="Ring B.Z."/>
            <person name="Ringwald M."/>
            <person name="Rost B."/>
            <person name="Ruan Y."/>
            <person name="Salzberg S.L."/>
            <person name="Sandelin A."/>
            <person name="Schneider C."/>
            <person name="Schoenbach C."/>
            <person name="Sekiguchi K."/>
            <person name="Semple C.A."/>
            <person name="Seno S."/>
            <person name="Sessa L."/>
            <person name="Sheng Y."/>
            <person name="Shibata Y."/>
            <person name="Shimada H."/>
            <person name="Shimada K."/>
            <person name="Silva D."/>
            <person name="Sinclair B."/>
            <person name="Sperling S."/>
            <person name="Stupka E."/>
            <person name="Sugiura K."/>
            <person name="Sultana R."/>
            <person name="Takenaka Y."/>
            <person name="Taki K."/>
            <person name="Tammoja K."/>
            <person name="Tan S.L."/>
            <person name="Tang S."/>
            <person name="Taylor M.S."/>
            <person name="Tegner J."/>
            <person name="Teichmann S.A."/>
            <person name="Ueda H.R."/>
            <person name="van Nimwegen E."/>
            <person name="Verardo R."/>
            <person name="Wei C.L."/>
            <person name="Yagi K."/>
            <person name="Yamanishi H."/>
            <person name="Zabarovsky E."/>
            <person name="Zhu S."/>
            <person name="Zimmer A."/>
            <person name="Hide W."/>
            <person name="Bult C."/>
            <person name="Grimmond S.M."/>
            <person name="Teasdale R.D."/>
            <person name="Liu E.T."/>
            <person name="Brusic V."/>
            <person name="Quackenbush J."/>
            <person name="Wahlestedt C."/>
            <person name="Mattick J.S."/>
            <person name="Hume D.A."/>
            <person name="Kai C."/>
            <person name="Sasaki D."/>
            <person name="Tomaru Y."/>
            <person name="Fukuda S."/>
            <person name="Kanamori-Katayama M."/>
            <person name="Suzuki M."/>
            <person name="Aoki J."/>
            <person name="Arakawa T."/>
            <person name="Iida J."/>
            <person name="Imamura K."/>
            <person name="Itoh M."/>
            <person name="Kato T."/>
            <person name="Kawaji H."/>
            <person name="Kawagashira N."/>
            <person name="Kawashima T."/>
            <person name="Kojima M."/>
            <person name="Kondo S."/>
            <person name="Konno H."/>
            <person name="Nakano K."/>
            <person name="Ninomiya N."/>
            <person name="Nishio T."/>
            <person name="Okada M."/>
            <person name="Plessy C."/>
            <person name="Shibata K."/>
            <person name="Shiraki T."/>
            <person name="Suzuki S."/>
            <person name="Tagami M."/>
            <person name="Waki K."/>
            <person name="Watahiki A."/>
            <person name="Okamura-Oho Y."/>
            <person name="Suzuki H."/>
            <person name="Kawai J."/>
            <person name="Hayashizaki Y."/>
        </authorList>
    </citation>
    <scope>NUCLEOTIDE SEQUENCE [LARGE SCALE MRNA] OF 1081-1486</scope>
    <source>
        <strain>C57BL/6J</strain>
        <tissue>Olfactory bulb</tissue>
    </source>
</reference>
<reference key="5">
    <citation type="journal article" date="2007" name="Proc. Natl. Acad. Sci. U.S.A.">
        <title>Large-scale phosphorylation analysis of mouse liver.</title>
        <authorList>
            <person name="Villen J."/>
            <person name="Beausoleil S.A."/>
            <person name="Gerber S.A."/>
            <person name="Gygi S.P."/>
        </authorList>
    </citation>
    <scope>PHOSPHORYLATION [LARGE SCALE ANALYSIS] AT SER-979</scope>
    <scope>IDENTIFICATION BY MASS SPECTROMETRY [LARGE SCALE ANALYSIS]</scope>
    <source>
        <tissue>Liver</tissue>
    </source>
</reference>
<reference key="6">
    <citation type="journal article" date="2009" name="Immunity">
        <title>The phagosomal proteome in interferon-gamma-activated macrophages.</title>
        <authorList>
            <person name="Trost M."/>
            <person name="English L."/>
            <person name="Lemieux S."/>
            <person name="Courcelles M."/>
            <person name="Desjardins M."/>
            <person name="Thibault P."/>
        </authorList>
    </citation>
    <scope>PHOSPHORYLATION [LARGE SCALE ANALYSIS] AT SER-60</scope>
    <scope>IDENTIFICATION BY MASS SPECTROMETRY [LARGE SCALE ANALYSIS]</scope>
</reference>
<reference key="7">
    <citation type="journal article" date="2010" name="Cell">
        <title>A tissue-specific atlas of mouse protein phosphorylation and expression.</title>
        <authorList>
            <person name="Huttlin E.L."/>
            <person name="Jedrychowski M.P."/>
            <person name="Elias J.E."/>
            <person name="Goswami T."/>
            <person name="Rad R."/>
            <person name="Beausoleil S.A."/>
            <person name="Villen J."/>
            <person name="Haas W."/>
            <person name="Sowa M.E."/>
            <person name="Gygi S.P."/>
        </authorList>
    </citation>
    <scope>PHOSPHORYLATION [LARGE SCALE ANALYSIS] AT SER-979 AND SER-1479</scope>
    <scope>IDENTIFICATION BY MASS SPECTROMETRY [LARGE SCALE ANALYSIS]</scope>
    <source>
        <tissue>Brain</tissue>
        <tissue>Brown adipose tissue</tissue>
        <tissue>Heart</tissue>
        <tissue>Kidney</tissue>
        <tissue>Liver</tissue>
        <tissue>Lung</tissue>
        <tissue>Pancreas</tissue>
        <tissue>Spleen</tissue>
        <tissue>Testis</tissue>
    </source>
</reference>
<feature type="chain" id="PRO_0000190058" description="Golgin subfamily A member 3">
    <location>
        <begin position="1"/>
        <end position="1487"/>
    </location>
</feature>
<feature type="region of interest" description="Disordered" evidence="4">
    <location>
        <begin position="1"/>
        <end position="118"/>
    </location>
</feature>
<feature type="region of interest" description="Interaction with GOPC" evidence="1">
    <location>
        <begin position="121"/>
        <end position="141"/>
    </location>
</feature>
<feature type="region of interest" description="Golgi-targeting domain" evidence="1">
    <location>
        <begin position="172"/>
        <end position="257"/>
    </location>
</feature>
<feature type="region of interest" description="Disordered" evidence="4">
    <location>
        <begin position="221"/>
        <end position="321"/>
    </location>
</feature>
<feature type="region of interest" description="Disordered" evidence="4">
    <location>
        <begin position="365"/>
        <end position="394"/>
    </location>
</feature>
<feature type="region of interest" description="Disordered" evidence="4">
    <location>
        <begin position="785"/>
        <end position="804"/>
    </location>
</feature>
<feature type="region of interest" description="Disordered" evidence="4">
    <location>
        <begin position="1372"/>
        <end position="1396"/>
    </location>
</feature>
<feature type="region of interest" description="Disordered" evidence="4">
    <location>
        <begin position="1458"/>
        <end position="1487"/>
    </location>
</feature>
<feature type="coiled-coil region" evidence="3">
    <location>
        <begin position="358"/>
        <end position="1454"/>
    </location>
</feature>
<feature type="compositionally biased region" description="Polar residues" evidence="4">
    <location>
        <begin position="62"/>
        <end position="74"/>
    </location>
</feature>
<feature type="compositionally biased region" description="Low complexity" evidence="4">
    <location>
        <begin position="269"/>
        <end position="288"/>
    </location>
</feature>
<feature type="compositionally biased region" description="Low complexity" evidence="4">
    <location>
        <begin position="312"/>
        <end position="321"/>
    </location>
</feature>
<feature type="compositionally biased region" description="Low complexity" evidence="4">
    <location>
        <begin position="365"/>
        <end position="375"/>
    </location>
</feature>
<feature type="compositionally biased region" description="Basic and acidic residues" evidence="4">
    <location>
        <begin position="785"/>
        <end position="796"/>
    </location>
</feature>
<feature type="compositionally biased region" description="Basic and acidic residues" evidence="4">
    <location>
        <begin position="1372"/>
        <end position="1382"/>
    </location>
</feature>
<feature type="compositionally biased region" description="Basic and acidic residues" evidence="4">
    <location>
        <begin position="1462"/>
        <end position="1474"/>
    </location>
</feature>
<feature type="modified residue" description="N-acetylmethionine" evidence="2">
    <location>
        <position position="1"/>
    </location>
</feature>
<feature type="modified residue" description="Phosphoserine" evidence="2">
    <location>
        <position position="18"/>
    </location>
</feature>
<feature type="modified residue" description="Phosphoserine" evidence="10">
    <location>
        <position position="60"/>
    </location>
</feature>
<feature type="modified residue" description="Phosphoserine" evidence="2">
    <location>
        <position position="270"/>
    </location>
</feature>
<feature type="modified residue" description="Phosphoserine" evidence="2">
    <location>
        <position position="381"/>
    </location>
</feature>
<feature type="modified residue" description="Phosphoserine" evidence="2">
    <location>
        <position position="385"/>
    </location>
</feature>
<feature type="modified residue" description="Phosphoserine" evidence="2">
    <location>
        <position position="461"/>
    </location>
</feature>
<feature type="modified residue" description="Phosphoserine" evidence="9 11">
    <location>
        <position position="979"/>
    </location>
</feature>
<feature type="modified residue" description="Phosphoserine" evidence="2">
    <location>
        <position position="1387"/>
    </location>
</feature>
<feature type="modified residue" description="Phosphoserine" evidence="11">
    <location>
        <position position="1479"/>
    </location>
</feature>
<feature type="splice variant" id="VSP_016071" description="In isoform 1." evidence="6 7">
    <location>
        <begin position="97"/>
        <end position="136"/>
    </location>
</feature>
<feature type="sequence conflict" description="In Ref. 3; AAH53002." evidence="8" ref="3">
    <original>T</original>
    <variation>I</variation>
    <location>
        <position position="30"/>
    </location>
</feature>
<feature type="sequence conflict" description="In Ref. 3; AAH53002." evidence="8" ref="3">
    <original>G</original>
    <variation>E</variation>
    <location>
        <position position="477"/>
    </location>
</feature>
<feature type="sequence conflict" description="In Ref. 2; BAA86889/BAA86890." evidence="8" ref="2">
    <original>M</original>
    <variation>T</variation>
    <location>
        <position position="592"/>
    </location>
</feature>
<feature type="sequence conflict" description="In Ref. 2; BAA86889/BAA86890." evidence="8" ref="2">
    <original>Q</original>
    <variation>L</variation>
    <location>
        <position position="843"/>
    </location>
</feature>
<feature type="sequence conflict" description="In Ref. 3; AAH53002." evidence="8" ref="3">
    <original>T</original>
    <variation>S</variation>
    <location>
        <position position="982"/>
    </location>
</feature>
<feature type="sequence conflict" description="In Ref. 3; AAH43452." evidence="8" ref="3">
    <original>A</original>
    <variation>S</variation>
    <location>
        <position position="1015"/>
    </location>
</feature>
<feature type="sequence conflict" description="In Ref. 4; BAC27949." evidence="8" ref="4">
    <original>A</original>
    <variation>P</variation>
    <location>
        <position position="1466"/>
    </location>
</feature>
<name>GOGA3_MOUSE</name>
<dbReference type="EMBL" id="D78270">
    <property type="protein sequence ID" value="BAA19612.2"/>
    <property type="molecule type" value="mRNA"/>
</dbReference>
<dbReference type="EMBL" id="AB029537">
    <property type="protein sequence ID" value="BAA86889.2"/>
    <property type="molecule type" value="Genomic_DNA"/>
</dbReference>
<dbReference type="EMBL" id="AB029537">
    <property type="protein sequence ID" value="BAA86890.2"/>
    <property type="molecule type" value="Genomic_DNA"/>
</dbReference>
<dbReference type="EMBL" id="BC043452">
    <property type="protein sequence ID" value="AAH43452.1"/>
    <property type="molecule type" value="mRNA"/>
</dbReference>
<dbReference type="EMBL" id="BC053002">
    <property type="protein sequence ID" value="AAH53002.1"/>
    <property type="molecule type" value="mRNA"/>
</dbReference>
<dbReference type="EMBL" id="AK032610">
    <property type="protein sequence ID" value="BAC27949.1"/>
    <property type="molecule type" value="mRNA"/>
</dbReference>
<dbReference type="CCDS" id="CCDS39209.1">
    <molecule id="P55937-1"/>
</dbReference>
<dbReference type="CCDS" id="CCDS84928.1">
    <molecule id="P55937-2"/>
</dbReference>
<dbReference type="PIR" id="T42722">
    <property type="entry name" value="T42722"/>
</dbReference>
<dbReference type="RefSeq" id="NP_032172.3">
    <property type="nucleotide sequence ID" value="NM_008146.3"/>
</dbReference>
<dbReference type="SMR" id="P55937"/>
<dbReference type="BioGRID" id="234694">
    <property type="interactions" value="11"/>
</dbReference>
<dbReference type="FunCoup" id="P55937">
    <property type="interactions" value="2439"/>
</dbReference>
<dbReference type="IntAct" id="P55937">
    <property type="interactions" value="6"/>
</dbReference>
<dbReference type="MINT" id="P55937"/>
<dbReference type="STRING" id="10090.ENSMUSP00000031477"/>
<dbReference type="GlyGen" id="P55937">
    <property type="glycosylation" value="1 site, 1 O-linked glycan (1 site)"/>
</dbReference>
<dbReference type="iPTMnet" id="P55937"/>
<dbReference type="PhosphoSitePlus" id="P55937"/>
<dbReference type="jPOST" id="P55937"/>
<dbReference type="PaxDb" id="10090-ENSMUSP00000031477"/>
<dbReference type="PeptideAtlas" id="P55937"/>
<dbReference type="ProteomicsDB" id="271247">
    <molecule id="P55937-2"/>
</dbReference>
<dbReference type="ProteomicsDB" id="271248">
    <molecule id="P55937-1"/>
</dbReference>
<dbReference type="Pumba" id="P55937"/>
<dbReference type="DNASU" id="269682"/>
<dbReference type="GeneID" id="269682"/>
<dbReference type="KEGG" id="mmu:269682"/>
<dbReference type="AGR" id="MGI:96958"/>
<dbReference type="CTD" id="2802"/>
<dbReference type="MGI" id="MGI:96958">
    <property type="gene designation" value="Golga3"/>
</dbReference>
<dbReference type="eggNOG" id="ENOG502QU6P">
    <property type="taxonomic scope" value="Eukaryota"/>
</dbReference>
<dbReference type="InParanoid" id="P55937"/>
<dbReference type="OrthoDB" id="2286360at2759"/>
<dbReference type="PhylomeDB" id="P55937"/>
<dbReference type="Reactome" id="R-MMU-9696270">
    <property type="pathway name" value="RND2 GTPase cycle"/>
</dbReference>
<dbReference type="BioGRID-ORCS" id="269682">
    <property type="hits" value="1 hit in 78 CRISPR screens"/>
</dbReference>
<dbReference type="ChiTaRS" id="Golga3">
    <property type="organism name" value="mouse"/>
</dbReference>
<dbReference type="PRO" id="PR:P55937"/>
<dbReference type="Proteomes" id="UP000000589">
    <property type="component" value="Unplaced"/>
</dbReference>
<dbReference type="RNAct" id="P55937">
    <property type="molecule type" value="protein"/>
</dbReference>
<dbReference type="GO" id="GO:0005793">
    <property type="term" value="C:endoplasmic reticulum-Golgi intermediate compartment"/>
    <property type="evidence" value="ECO:0000314"/>
    <property type="project" value="MGI"/>
</dbReference>
<dbReference type="GO" id="GO:0032580">
    <property type="term" value="C:Golgi cisterna membrane"/>
    <property type="evidence" value="ECO:0007669"/>
    <property type="project" value="UniProtKB-SubCell"/>
</dbReference>
<dbReference type="GO" id="GO:0000139">
    <property type="term" value="C:Golgi membrane"/>
    <property type="evidence" value="ECO:0000314"/>
    <property type="project" value="MGI"/>
</dbReference>
<dbReference type="GO" id="GO:0030154">
    <property type="term" value="P:cell differentiation"/>
    <property type="evidence" value="ECO:0007669"/>
    <property type="project" value="UniProtKB-KW"/>
</dbReference>
<dbReference type="GO" id="GO:0007283">
    <property type="term" value="P:spermatogenesis"/>
    <property type="evidence" value="ECO:0007669"/>
    <property type="project" value="UniProtKB-KW"/>
</dbReference>
<dbReference type="FunFam" id="1.10.287.1490:FF:000025">
    <property type="entry name" value="golgin subfamily A member 3"/>
    <property type="match status" value="1"/>
</dbReference>
<dbReference type="InterPro" id="IPR051841">
    <property type="entry name" value="MT-Golgi_org_protein"/>
</dbReference>
<dbReference type="PANTHER" id="PTHR18902:SF26">
    <property type="entry name" value="GOLGIN SUBFAMILY A MEMBER 3"/>
    <property type="match status" value="1"/>
</dbReference>
<dbReference type="PANTHER" id="PTHR18902">
    <property type="entry name" value="NUCLEAR MITOTIC APPARATUS PROTEIN 1-RELATED"/>
    <property type="match status" value="1"/>
</dbReference>
<proteinExistence type="evidence at protein level"/>
<sequence length="1487" mass="167220">MDGASAKQDGLWESKSSSDVSSCPEASLETVGSLARLPDQQDTAQDASVEVNRGFKEEGSPDRSSQVAICQNGQIPDLQLSLDPTTSPVGPDASTGVDGFHDNLRNSQGTSAEGSVRKEALQSLRLSLPMQETQLCSTASSLPLEKEEQVRLQARKRLEEQLMQYRVKRHRERSSQPATKMKLFSTLDPELMLNPENLPRASTVAVTKEYSFLRTSVPRGPKVGSLGLLAHSKEKKNSKSSKIRSLADYRTEDPSDSGGLGSTADAVGSSLKQSRSSTSVVSEVSPSSETDNRVESASMTGDSVSEADGNESDSSSHSSLSARGACGVLGNVGMPGTAYMVDGQEISAEALGQFPSIKDVLQAAAAQHQDQNQEANGEVRSRRDSICSSVSMESSLAEPQDELLQILKDKRRLEGQVEALSLEASQALQEKAELQAQLAALSTRLQAQVEHSHSSQQKQDSLSSEVDTLKQSCWDLGRAMTDLQSMLEAKNASLASSNNDLQVAEEQYQRLMAKVEDMQRNILSKDNTVHDLRQQMTALQSQLQQVQLERTTLTSKLQASQAEITSLQHARQWYQQQLTLAQEARVRLQGEMAHIQVGQMTQAGLLEHLKLENVSLSHQLTETQHRSIKEKERIAVQLQSIEADMLDQEAAFVQIREAKTMVEEDLQRRLEEFEGEREQLQKVADAAASLEQQLEQVKLTLFQRDQQLAALQQEHLDVIKQLTSTQEALQAKGQSLDDLHTRYDELQARLEELQREADSREDAIHFLQNEKIVLEVALQSAKSDKEELDRGARRLEEDTEETSGLLEQLRQDLAVKSNQVEHLQQETATLRKQMQKVKEQFVQQKVMVEAYRRDATSKDQLINELKATKKRLDSEMKELRQELIKLQGEKKTVEVEHSRLQKDMSLVHQQMAELEGHLQSVQKERDEMEIHLQSLKFDKEQMIALTEANETLKKQIEELQQEAKKAITEQKQKMKRLGSDLTSAQKEMKTKHKAYENAVSILSRRLQEALASKEATDAELNQLRAQSTGGSSDPVLHEKIRALEVELQNVGQSKILLEKELQEVITMTSQELEESREKVLELEDELQESRGFRRKIKRLEESNKKLALELEHERGKLTGLGQSNAALREHNSILETALAKREADLVQLNLQVQAVLQRKEEEDRQMKQLVQALQVSLEKEKMEVNSLKEQMAAARIEAGHNRRHFKAATLELSEVKKELQAKEHLVQTLQAEVDELQIQDGKHSQEIAQFQTELAEARTQLQLLQKKLDEQMSQQPTGSQEMEDLKWELDQKEREIQSLKQQLDLTEQQGKKELEGTQQTLQTIKSELEMVQEDLSETQKDKFMLQAKVSELKNNMKTLLQQNQQLKLDLRRGAAKKKEPKGESNSSSPATPIKIPDCPVPASLLEELLRPPPAVSKEPLKNLNNCLQQLKQEMDSLQRQMEEHTITVHESLSSWAQVEAAPAEHAHPRGDTKLHNQNSVPRDGLGQ</sequence>
<gene>
    <name type="primary">Golga3</name>
    <name type="synonym">Mea2</name>
</gene>
<organism>
    <name type="scientific">Mus musculus</name>
    <name type="common">Mouse</name>
    <dbReference type="NCBI Taxonomy" id="10090"/>
    <lineage>
        <taxon>Eukaryota</taxon>
        <taxon>Metazoa</taxon>
        <taxon>Chordata</taxon>
        <taxon>Craniata</taxon>
        <taxon>Vertebrata</taxon>
        <taxon>Euteleostomi</taxon>
        <taxon>Mammalia</taxon>
        <taxon>Eutheria</taxon>
        <taxon>Euarchontoglires</taxon>
        <taxon>Glires</taxon>
        <taxon>Rodentia</taxon>
        <taxon>Myomorpha</taxon>
        <taxon>Muroidea</taxon>
        <taxon>Muridae</taxon>
        <taxon>Murinae</taxon>
        <taxon>Mus</taxon>
        <taxon>Mus</taxon>
    </lineage>
</organism>